<reference key="1">
    <citation type="journal article" date="2006" name="Proc. Natl. Acad. Sci. U.S.A.">
        <title>Genome sequence of Synechococcus CC9311: insights into adaptation to a coastal environment.</title>
        <authorList>
            <person name="Palenik B."/>
            <person name="Ren Q."/>
            <person name="Dupont C.L."/>
            <person name="Myers G.S."/>
            <person name="Heidelberg J.F."/>
            <person name="Badger J.H."/>
            <person name="Madupu R."/>
            <person name="Nelson W.C."/>
            <person name="Brinkac L.M."/>
            <person name="Dodson R.J."/>
            <person name="Durkin A.S."/>
            <person name="Daugherty S.C."/>
            <person name="Sullivan S.A."/>
            <person name="Khouri H."/>
            <person name="Mohamoud Y."/>
            <person name="Halpin R."/>
            <person name="Paulsen I.T."/>
        </authorList>
    </citation>
    <scope>NUCLEOTIDE SEQUENCE [LARGE SCALE GENOMIC DNA]</scope>
    <source>
        <strain>CC9311</strain>
    </source>
</reference>
<name>RL13_SYNS3</name>
<dbReference type="EMBL" id="CP000435">
    <property type="protein sequence ID" value="ABI46449.1"/>
    <property type="molecule type" value="Genomic_DNA"/>
</dbReference>
<dbReference type="RefSeq" id="WP_011618379.1">
    <property type="nucleotide sequence ID" value="NC_008319.1"/>
</dbReference>
<dbReference type="SMR" id="Q0ID31"/>
<dbReference type="STRING" id="64471.sync_0411"/>
<dbReference type="KEGG" id="syg:sync_0411"/>
<dbReference type="eggNOG" id="COG0102">
    <property type="taxonomic scope" value="Bacteria"/>
</dbReference>
<dbReference type="HOGENOM" id="CLU_082184_2_2_3"/>
<dbReference type="OrthoDB" id="9801330at2"/>
<dbReference type="Proteomes" id="UP000001961">
    <property type="component" value="Chromosome"/>
</dbReference>
<dbReference type="GO" id="GO:0022625">
    <property type="term" value="C:cytosolic large ribosomal subunit"/>
    <property type="evidence" value="ECO:0007669"/>
    <property type="project" value="TreeGrafter"/>
</dbReference>
<dbReference type="GO" id="GO:0003729">
    <property type="term" value="F:mRNA binding"/>
    <property type="evidence" value="ECO:0007669"/>
    <property type="project" value="TreeGrafter"/>
</dbReference>
<dbReference type="GO" id="GO:0003735">
    <property type="term" value="F:structural constituent of ribosome"/>
    <property type="evidence" value="ECO:0007669"/>
    <property type="project" value="InterPro"/>
</dbReference>
<dbReference type="GO" id="GO:0017148">
    <property type="term" value="P:negative regulation of translation"/>
    <property type="evidence" value="ECO:0007669"/>
    <property type="project" value="TreeGrafter"/>
</dbReference>
<dbReference type="GO" id="GO:0006412">
    <property type="term" value="P:translation"/>
    <property type="evidence" value="ECO:0007669"/>
    <property type="project" value="UniProtKB-UniRule"/>
</dbReference>
<dbReference type="CDD" id="cd00392">
    <property type="entry name" value="Ribosomal_L13"/>
    <property type="match status" value="1"/>
</dbReference>
<dbReference type="FunFam" id="3.90.1180.10:FF:000001">
    <property type="entry name" value="50S ribosomal protein L13"/>
    <property type="match status" value="1"/>
</dbReference>
<dbReference type="Gene3D" id="3.90.1180.10">
    <property type="entry name" value="Ribosomal protein L13"/>
    <property type="match status" value="1"/>
</dbReference>
<dbReference type="HAMAP" id="MF_01366">
    <property type="entry name" value="Ribosomal_uL13"/>
    <property type="match status" value="1"/>
</dbReference>
<dbReference type="InterPro" id="IPR005822">
    <property type="entry name" value="Ribosomal_uL13"/>
</dbReference>
<dbReference type="InterPro" id="IPR005823">
    <property type="entry name" value="Ribosomal_uL13_bac-type"/>
</dbReference>
<dbReference type="InterPro" id="IPR023563">
    <property type="entry name" value="Ribosomal_uL13_CS"/>
</dbReference>
<dbReference type="InterPro" id="IPR036899">
    <property type="entry name" value="Ribosomal_uL13_sf"/>
</dbReference>
<dbReference type="NCBIfam" id="TIGR01066">
    <property type="entry name" value="rplM_bact"/>
    <property type="match status" value="1"/>
</dbReference>
<dbReference type="PANTHER" id="PTHR11545:SF2">
    <property type="entry name" value="LARGE RIBOSOMAL SUBUNIT PROTEIN UL13M"/>
    <property type="match status" value="1"/>
</dbReference>
<dbReference type="PANTHER" id="PTHR11545">
    <property type="entry name" value="RIBOSOMAL PROTEIN L13"/>
    <property type="match status" value="1"/>
</dbReference>
<dbReference type="Pfam" id="PF00572">
    <property type="entry name" value="Ribosomal_L13"/>
    <property type="match status" value="1"/>
</dbReference>
<dbReference type="PIRSF" id="PIRSF002181">
    <property type="entry name" value="Ribosomal_L13"/>
    <property type="match status" value="1"/>
</dbReference>
<dbReference type="SUPFAM" id="SSF52161">
    <property type="entry name" value="Ribosomal protein L13"/>
    <property type="match status" value="1"/>
</dbReference>
<dbReference type="PROSITE" id="PS00783">
    <property type="entry name" value="RIBOSOMAL_L13"/>
    <property type="match status" value="1"/>
</dbReference>
<keyword id="KW-1185">Reference proteome</keyword>
<keyword id="KW-0687">Ribonucleoprotein</keyword>
<keyword id="KW-0689">Ribosomal protein</keyword>
<feature type="chain" id="PRO_1000055484" description="Large ribosomal subunit protein uL13">
    <location>
        <begin position="1"/>
        <end position="150"/>
    </location>
</feature>
<feature type="region of interest" description="Disordered" evidence="2">
    <location>
        <begin position="130"/>
        <end position="150"/>
    </location>
</feature>
<gene>
    <name evidence="1" type="primary">rplM</name>
    <name evidence="1" type="synonym">rpl13</name>
    <name type="ordered locus">sync_0411</name>
</gene>
<evidence type="ECO:0000255" key="1">
    <source>
        <dbReference type="HAMAP-Rule" id="MF_01366"/>
    </source>
</evidence>
<evidence type="ECO:0000256" key="2">
    <source>
        <dbReference type="SAM" id="MobiDB-lite"/>
    </source>
</evidence>
<evidence type="ECO:0000305" key="3"/>
<proteinExistence type="inferred from homology"/>
<sequence length="150" mass="16858">MNKTSVPSIDSIDRQWYLVDAENQTLGRLATEVASVLRGKNKASFTPHLDTGDFVIVVNADKIRVSGKKPQQKLYRRHSGRPGGMKVETFEHLQERLPERIVEKAIKGMLPHNALGRQLFRKLKVYKGTEHPHAAQQPKTLQLDPAASAQ</sequence>
<accession>Q0ID31</accession>
<protein>
    <recommendedName>
        <fullName evidence="1">Large ribosomal subunit protein uL13</fullName>
    </recommendedName>
    <alternativeName>
        <fullName evidence="3">50S ribosomal protein L13</fullName>
    </alternativeName>
</protein>
<organism>
    <name type="scientific">Synechococcus sp. (strain CC9311)</name>
    <dbReference type="NCBI Taxonomy" id="64471"/>
    <lineage>
        <taxon>Bacteria</taxon>
        <taxon>Bacillati</taxon>
        <taxon>Cyanobacteriota</taxon>
        <taxon>Cyanophyceae</taxon>
        <taxon>Synechococcales</taxon>
        <taxon>Synechococcaceae</taxon>
        <taxon>Synechococcus</taxon>
    </lineage>
</organism>
<comment type="function">
    <text evidence="1">This protein is one of the early assembly proteins of the 50S ribosomal subunit, although it is not seen to bind rRNA by itself. It is important during the early stages of 50S assembly.</text>
</comment>
<comment type="subunit">
    <text evidence="1">Part of the 50S ribosomal subunit.</text>
</comment>
<comment type="similarity">
    <text evidence="1">Belongs to the universal ribosomal protein uL13 family.</text>
</comment>